<name>RBFA_ALCBS</name>
<gene>
    <name evidence="1" type="primary">rbfA</name>
    <name type="ordered locus">ABO_0330</name>
</gene>
<sequence>MSRHRRPQGFNRTDRVADQIQRELSRLLQFEMKDPRVNLATIQDVTVSRDLSYAEVYFTLLGQGEEAGAEAEEVLTKASGFLRSSLAQGLNTRTTPKLRFHYDMTPERAAHLSQLIDEARAEDRELRPEDDETGNNE</sequence>
<evidence type="ECO:0000255" key="1">
    <source>
        <dbReference type="HAMAP-Rule" id="MF_00003"/>
    </source>
</evidence>
<evidence type="ECO:0000256" key="2">
    <source>
        <dbReference type="SAM" id="MobiDB-lite"/>
    </source>
</evidence>
<keyword id="KW-0963">Cytoplasm</keyword>
<keyword id="KW-1185">Reference proteome</keyword>
<keyword id="KW-0690">Ribosome biogenesis</keyword>
<feature type="chain" id="PRO_0000321198" description="Ribosome-binding factor A">
    <location>
        <begin position="1"/>
        <end position="137"/>
    </location>
</feature>
<feature type="region of interest" description="Disordered" evidence="2">
    <location>
        <begin position="114"/>
        <end position="137"/>
    </location>
</feature>
<feature type="compositionally biased region" description="Basic and acidic residues" evidence="2">
    <location>
        <begin position="117"/>
        <end position="127"/>
    </location>
</feature>
<feature type="compositionally biased region" description="Acidic residues" evidence="2">
    <location>
        <begin position="128"/>
        <end position="137"/>
    </location>
</feature>
<comment type="function">
    <text evidence="1">One of several proteins that assist in the late maturation steps of the functional core of the 30S ribosomal subunit. Associates with free 30S ribosomal subunits (but not with 30S subunits that are part of 70S ribosomes or polysomes). Required for efficient processing of 16S rRNA. May interact with the 5'-terminal helix region of 16S rRNA.</text>
</comment>
<comment type="subunit">
    <text evidence="1">Monomer. Binds 30S ribosomal subunits, but not 50S ribosomal subunits or 70S ribosomes.</text>
</comment>
<comment type="subcellular location">
    <subcellularLocation>
        <location evidence="1">Cytoplasm</location>
    </subcellularLocation>
</comment>
<comment type="similarity">
    <text evidence="1">Belongs to the RbfA family.</text>
</comment>
<dbReference type="EMBL" id="AM286690">
    <property type="protein sequence ID" value="CAL15778.1"/>
    <property type="molecule type" value="Genomic_DNA"/>
</dbReference>
<dbReference type="RefSeq" id="WP_011587626.1">
    <property type="nucleotide sequence ID" value="NC_008260.1"/>
</dbReference>
<dbReference type="SMR" id="Q0VSS0"/>
<dbReference type="STRING" id="393595.ABO_0330"/>
<dbReference type="KEGG" id="abo:ABO_0330"/>
<dbReference type="eggNOG" id="COG0858">
    <property type="taxonomic scope" value="Bacteria"/>
</dbReference>
<dbReference type="HOGENOM" id="CLU_089475_5_0_6"/>
<dbReference type="OrthoDB" id="307788at2"/>
<dbReference type="Proteomes" id="UP000008871">
    <property type="component" value="Chromosome"/>
</dbReference>
<dbReference type="GO" id="GO:0005829">
    <property type="term" value="C:cytosol"/>
    <property type="evidence" value="ECO:0007669"/>
    <property type="project" value="TreeGrafter"/>
</dbReference>
<dbReference type="GO" id="GO:0043024">
    <property type="term" value="F:ribosomal small subunit binding"/>
    <property type="evidence" value="ECO:0007669"/>
    <property type="project" value="TreeGrafter"/>
</dbReference>
<dbReference type="GO" id="GO:0030490">
    <property type="term" value="P:maturation of SSU-rRNA"/>
    <property type="evidence" value="ECO:0007669"/>
    <property type="project" value="UniProtKB-UniRule"/>
</dbReference>
<dbReference type="Gene3D" id="3.30.300.20">
    <property type="match status" value="1"/>
</dbReference>
<dbReference type="HAMAP" id="MF_00003">
    <property type="entry name" value="RbfA"/>
    <property type="match status" value="1"/>
</dbReference>
<dbReference type="InterPro" id="IPR015946">
    <property type="entry name" value="KH_dom-like_a/b"/>
</dbReference>
<dbReference type="InterPro" id="IPR000238">
    <property type="entry name" value="RbfA"/>
</dbReference>
<dbReference type="InterPro" id="IPR023799">
    <property type="entry name" value="RbfA_dom_sf"/>
</dbReference>
<dbReference type="NCBIfam" id="TIGR00082">
    <property type="entry name" value="rbfA"/>
    <property type="match status" value="1"/>
</dbReference>
<dbReference type="PANTHER" id="PTHR33515">
    <property type="entry name" value="RIBOSOME-BINDING FACTOR A, CHLOROPLASTIC-RELATED"/>
    <property type="match status" value="1"/>
</dbReference>
<dbReference type="PANTHER" id="PTHR33515:SF1">
    <property type="entry name" value="RIBOSOME-BINDING FACTOR A, CHLOROPLASTIC-RELATED"/>
    <property type="match status" value="1"/>
</dbReference>
<dbReference type="Pfam" id="PF02033">
    <property type="entry name" value="RBFA"/>
    <property type="match status" value="1"/>
</dbReference>
<dbReference type="SUPFAM" id="SSF89919">
    <property type="entry name" value="Ribosome-binding factor A, RbfA"/>
    <property type="match status" value="1"/>
</dbReference>
<protein>
    <recommendedName>
        <fullName evidence="1">Ribosome-binding factor A</fullName>
    </recommendedName>
</protein>
<reference key="1">
    <citation type="journal article" date="2006" name="Nat. Biotechnol.">
        <title>Genome sequence of the ubiquitous hydrocarbon-degrading marine bacterium Alcanivorax borkumensis.</title>
        <authorList>
            <person name="Schneiker S."/>
            <person name="Martins dos Santos V.A.P."/>
            <person name="Bartels D."/>
            <person name="Bekel T."/>
            <person name="Brecht M."/>
            <person name="Buhrmester J."/>
            <person name="Chernikova T.N."/>
            <person name="Denaro R."/>
            <person name="Ferrer M."/>
            <person name="Gertler C."/>
            <person name="Goesmann A."/>
            <person name="Golyshina O.V."/>
            <person name="Kaminski F."/>
            <person name="Khachane A.N."/>
            <person name="Lang S."/>
            <person name="Linke B."/>
            <person name="McHardy A.C."/>
            <person name="Meyer F."/>
            <person name="Nechitaylo T."/>
            <person name="Puehler A."/>
            <person name="Regenhardt D."/>
            <person name="Rupp O."/>
            <person name="Sabirova J.S."/>
            <person name="Selbitschka W."/>
            <person name="Yakimov M.M."/>
            <person name="Timmis K.N."/>
            <person name="Vorhoelter F.-J."/>
            <person name="Weidner S."/>
            <person name="Kaiser O."/>
            <person name="Golyshin P.N."/>
        </authorList>
    </citation>
    <scope>NUCLEOTIDE SEQUENCE [LARGE SCALE GENOMIC DNA]</scope>
    <source>
        <strain>ATCC 700651 / DSM 11573 / NCIMB 13689 / SK2</strain>
    </source>
</reference>
<proteinExistence type="inferred from homology"/>
<organism>
    <name type="scientific">Alcanivorax borkumensis (strain ATCC 700651 / DSM 11573 / NCIMB 13689 / SK2)</name>
    <dbReference type="NCBI Taxonomy" id="393595"/>
    <lineage>
        <taxon>Bacteria</taxon>
        <taxon>Pseudomonadati</taxon>
        <taxon>Pseudomonadota</taxon>
        <taxon>Gammaproteobacteria</taxon>
        <taxon>Oceanospirillales</taxon>
        <taxon>Alcanivoracaceae</taxon>
        <taxon>Alcanivorax</taxon>
    </lineage>
</organism>
<accession>Q0VSS0</accession>